<organism>
    <name type="scientific">Methylocella silvestris (strain DSM 15510 / CIP 108128 / LMG 27833 / NCIMB 13906 / BL2)</name>
    <dbReference type="NCBI Taxonomy" id="395965"/>
    <lineage>
        <taxon>Bacteria</taxon>
        <taxon>Pseudomonadati</taxon>
        <taxon>Pseudomonadota</taxon>
        <taxon>Alphaproteobacteria</taxon>
        <taxon>Hyphomicrobiales</taxon>
        <taxon>Beijerinckiaceae</taxon>
        <taxon>Methylocella</taxon>
    </lineage>
</organism>
<evidence type="ECO:0000255" key="1">
    <source>
        <dbReference type="HAMAP-Rule" id="MF_00487"/>
    </source>
</evidence>
<keyword id="KW-0520">NAD</keyword>
<keyword id="KW-0560">Oxidoreductase</keyword>
<keyword id="KW-1185">Reference proteome</keyword>
<keyword id="KW-0816">Tricarboxylic acid cycle</keyword>
<accession>B8EM38</accession>
<feature type="chain" id="PRO_1000191651" description="Malate dehydrogenase">
    <location>
        <begin position="1"/>
        <end position="321"/>
    </location>
</feature>
<feature type="active site" description="Proton acceptor" evidence="1">
    <location>
        <position position="176"/>
    </location>
</feature>
<feature type="binding site" evidence="1">
    <location>
        <begin position="10"/>
        <end position="15"/>
    </location>
    <ligand>
        <name>NAD(+)</name>
        <dbReference type="ChEBI" id="CHEBI:57540"/>
    </ligand>
</feature>
<feature type="binding site" evidence="1">
    <location>
        <position position="34"/>
    </location>
    <ligand>
        <name>NAD(+)</name>
        <dbReference type="ChEBI" id="CHEBI:57540"/>
    </ligand>
</feature>
<feature type="binding site" evidence="1">
    <location>
        <position position="83"/>
    </location>
    <ligand>
        <name>substrate</name>
    </ligand>
</feature>
<feature type="binding site" evidence="1">
    <location>
        <position position="89"/>
    </location>
    <ligand>
        <name>substrate</name>
    </ligand>
</feature>
<feature type="binding site" evidence="1">
    <location>
        <position position="96"/>
    </location>
    <ligand>
        <name>NAD(+)</name>
        <dbReference type="ChEBI" id="CHEBI:57540"/>
    </ligand>
</feature>
<feature type="binding site" evidence="1">
    <location>
        <begin position="119"/>
        <end position="121"/>
    </location>
    <ligand>
        <name>NAD(+)</name>
        <dbReference type="ChEBI" id="CHEBI:57540"/>
    </ligand>
</feature>
<feature type="binding site" evidence="1">
    <location>
        <position position="121"/>
    </location>
    <ligand>
        <name>substrate</name>
    </ligand>
</feature>
<feature type="binding site" evidence="1">
    <location>
        <position position="152"/>
    </location>
    <ligand>
        <name>substrate</name>
    </ligand>
</feature>
<comment type="function">
    <text evidence="1">Catalyzes the reversible oxidation of malate to oxaloacetate.</text>
</comment>
<comment type="catalytic activity">
    <reaction evidence="1">
        <text>(S)-malate + NAD(+) = oxaloacetate + NADH + H(+)</text>
        <dbReference type="Rhea" id="RHEA:21432"/>
        <dbReference type="ChEBI" id="CHEBI:15378"/>
        <dbReference type="ChEBI" id="CHEBI:15589"/>
        <dbReference type="ChEBI" id="CHEBI:16452"/>
        <dbReference type="ChEBI" id="CHEBI:57540"/>
        <dbReference type="ChEBI" id="CHEBI:57945"/>
        <dbReference type="EC" id="1.1.1.37"/>
    </reaction>
</comment>
<comment type="similarity">
    <text evidence="1">Belongs to the LDH/MDH superfamily. MDH type 3 family.</text>
</comment>
<sequence>MARSKIALIGAGQIGGTLAHLAALKELGDIVLFDIAEGTPQGKALDLAESGPVEGFNASLKGANSYADIAGADVIIVTAGVPRKPGMSRDDLLGINLKVMDAVGGGIKQYAPDAFVICITNPLDAMVWALQKSSGLAPAKIVGMAGVLDSARFRYFLSEEFKVSVEDVTAFVLGGHGDDMVPSLRYSTVAGIPLTDLVKLGWTTQERLDAIVERTRKGGGEIVNLLKTGSAFYAPAASAIAMAEAYLKDKRRVLPCAAQLSGQYGVDNLYVGVPVVIGANGVEKIVEVTLDESEKAMFAKSVESVRGLVEACKVINPALAG</sequence>
<proteinExistence type="inferred from homology"/>
<protein>
    <recommendedName>
        <fullName evidence="1">Malate dehydrogenase</fullName>
        <ecNumber evidence="1">1.1.1.37</ecNumber>
    </recommendedName>
</protein>
<gene>
    <name evidence="1" type="primary">mdh</name>
    <name type="ordered locus">Msil_2501</name>
</gene>
<dbReference type="EC" id="1.1.1.37" evidence="1"/>
<dbReference type="EMBL" id="CP001280">
    <property type="protein sequence ID" value="ACK51427.1"/>
    <property type="molecule type" value="Genomic_DNA"/>
</dbReference>
<dbReference type="RefSeq" id="WP_012591496.1">
    <property type="nucleotide sequence ID" value="NC_011666.1"/>
</dbReference>
<dbReference type="SMR" id="B8EM38"/>
<dbReference type="STRING" id="395965.Msil_2501"/>
<dbReference type="KEGG" id="msl:Msil_2501"/>
<dbReference type="eggNOG" id="COG0039">
    <property type="taxonomic scope" value="Bacteria"/>
</dbReference>
<dbReference type="HOGENOM" id="CLU_045401_2_1_5"/>
<dbReference type="OrthoDB" id="9802969at2"/>
<dbReference type="Proteomes" id="UP000002257">
    <property type="component" value="Chromosome"/>
</dbReference>
<dbReference type="GO" id="GO:0004459">
    <property type="term" value="F:L-lactate dehydrogenase activity"/>
    <property type="evidence" value="ECO:0007669"/>
    <property type="project" value="TreeGrafter"/>
</dbReference>
<dbReference type="GO" id="GO:0030060">
    <property type="term" value="F:L-malate dehydrogenase (NAD+) activity"/>
    <property type="evidence" value="ECO:0007669"/>
    <property type="project" value="UniProtKB-UniRule"/>
</dbReference>
<dbReference type="GO" id="GO:0006089">
    <property type="term" value="P:lactate metabolic process"/>
    <property type="evidence" value="ECO:0007669"/>
    <property type="project" value="TreeGrafter"/>
</dbReference>
<dbReference type="GO" id="GO:0006099">
    <property type="term" value="P:tricarboxylic acid cycle"/>
    <property type="evidence" value="ECO:0007669"/>
    <property type="project" value="UniProtKB-UniRule"/>
</dbReference>
<dbReference type="CDD" id="cd01339">
    <property type="entry name" value="LDH-like_MDH"/>
    <property type="match status" value="1"/>
</dbReference>
<dbReference type="FunFam" id="3.40.50.720:FF:000018">
    <property type="entry name" value="Malate dehydrogenase"/>
    <property type="match status" value="1"/>
</dbReference>
<dbReference type="FunFam" id="3.90.110.10:FF:000004">
    <property type="entry name" value="Malate dehydrogenase"/>
    <property type="match status" value="1"/>
</dbReference>
<dbReference type="Gene3D" id="3.90.110.10">
    <property type="entry name" value="Lactate dehydrogenase/glycoside hydrolase, family 4, C-terminal"/>
    <property type="match status" value="1"/>
</dbReference>
<dbReference type="Gene3D" id="3.40.50.720">
    <property type="entry name" value="NAD(P)-binding Rossmann-like Domain"/>
    <property type="match status" value="1"/>
</dbReference>
<dbReference type="HAMAP" id="MF_00487">
    <property type="entry name" value="Malate_dehydrog_3"/>
    <property type="match status" value="1"/>
</dbReference>
<dbReference type="InterPro" id="IPR001557">
    <property type="entry name" value="L-lactate/malate_DH"/>
</dbReference>
<dbReference type="InterPro" id="IPR022383">
    <property type="entry name" value="Lactate/malate_DH_C"/>
</dbReference>
<dbReference type="InterPro" id="IPR001236">
    <property type="entry name" value="Lactate/malate_DH_N"/>
</dbReference>
<dbReference type="InterPro" id="IPR015955">
    <property type="entry name" value="Lactate_DH/Glyco_Ohase_4_C"/>
</dbReference>
<dbReference type="InterPro" id="IPR011275">
    <property type="entry name" value="Malate_DH_type3"/>
</dbReference>
<dbReference type="InterPro" id="IPR036291">
    <property type="entry name" value="NAD(P)-bd_dom_sf"/>
</dbReference>
<dbReference type="NCBIfam" id="TIGR01763">
    <property type="entry name" value="MalateDH_bact"/>
    <property type="match status" value="1"/>
</dbReference>
<dbReference type="NCBIfam" id="NF004863">
    <property type="entry name" value="PRK06223.1"/>
    <property type="match status" value="1"/>
</dbReference>
<dbReference type="PANTHER" id="PTHR43128">
    <property type="entry name" value="L-2-HYDROXYCARBOXYLATE DEHYDROGENASE (NAD(P)(+))"/>
    <property type="match status" value="1"/>
</dbReference>
<dbReference type="PANTHER" id="PTHR43128:SF16">
    <property type="entry name" value="L-LACTATE DEHYDROGENASE"/>
    <property type="match status" value="1"/>
</dbReference>
<dbReference type="Pfam" id="PF02866">
    <property type="entry name" value="Ldh_1_C"/>
    <property type="match status" value="1"/>
</dbReference>
<dbReference type="Pfam" id="PF00056">
    <property type="entry name" value="Ldh_1_N"/>
    <property type="match status" value="1"/>
</dbReference>
<dbReference type="PIRSF" id="PIRSF000102">
    <property type="entry name" value="Lac_mal_DH"/>
    <property type="match status" value="1"/>
</dbReference>
<dbReference type="PRINTS" id="PR00086">
    <property type="entry name" value="LLDHDRGNASE"/>
</dbReference>
<dbReference type="SUPFAM" id="SSF56327">
    <property type="entry name" value="LDH C-terminal domain-like"/>
    <property type="match status" value="1"/>
</dbReference>
<dbReference type="SUPFAM" id="SSF51735">
    <property type="entry name" value="NAD(P)-binding Rossmann-fold domains"/>
    <property type="match status" value="1"/>
</dbReference>
<reference key="1">
    <citation type="journal article" date="2010" name="J. Bacteriol.">
        <title>Complete genome sequence of the aerobic facultative methanotroph Methylocella silvestris BL2.</title>
        <authorList>
            <person name="Chen Y."/>
            <person name="Crombie A."/>
            <person name="Rahman M.T."/>
            <person name="Dedysh S.N."/>
            <person name="Liesack W."/>
            <person name="Stott M.B."/>
            <person name="Alam M."/>
            <person name="Theisen A.R."/>
            <person name="Murrell J.C."/>
            <person name="Dunfield P.F."/>
        </authorList>
    </citation>
    <scope>NUCLEOTIDE SEQUENCE [LARGE SCALE GENOMIC DNA]</scope>
    <source>
        <strain>DSM 15510 / CIP 108128 / LMG 27833 / NCIMB 13906 / BL2</strain>
    </source>
</reference>
<name>MDH_METSB</name>